<protein>
    <recommendedName>
        <fullName evidence="1">Aspartate--tRNA(Asp/Asn) ligase</fullName>
        <ecNumber evidence="1">6.1.1.23</ecNumber>
    </recommendedName>
    <alternativeName>
        <fullName evidence="1">Aspartyl-tRNA synthetase</fullName>
        <shortName evidence="1">AspRS</shortName>
    </alternativeName>
    <alternativeName>
        <fullName evidence="1">Non-discriminating aspartyl-tRNA synthetase</fullName>
        <shortName evidence="1">ND-AspRS</shortName>
    </alternativeName>
</protein>
<evidence type="ECO:0000255" key="1">
    <source>
        <dbReference type="HAMAP-Rule" id="MF_00044"/>
    </source>
</evidence>
<gene>
    <name evidence="1" type="primary">aspS</name>
    <name type="ordered locus">Paes_1469</name>
</gene>
<proteinExistence type="inferred from homology"/>
<reference key="1">
    <citation type="submission" date="2008-06" db="EMBL/GenBank/DDBJ databases">
        <title>Complete sequence of chromosome of Prosthecochloris aestuarii DSM 271.</title>
        <authorList>
            <consortium name="US DOE Joint Genome Institute"/>
            <person name="Lucas S."/>
            <person name="Copeland A."/>
            <person name="Lapidus A."/>
            <person name="Glavina del Rio T."/>
            <person name="Dalin E."/>
            <person name="Tice H."/>
            <person name="Bruce D."/>
            <person name="Goodwin L."/>
            <person name="Pitluck S."/>
            <person name="Schmutz J."/>
            <person name="Larimer F."/>
            <person name="Land M."/>
            <person name="Hauser L."/>
            <person name="Kyrpides N."/>
            <person name="Anderson I."/>
            <person name="Liu Z."/>
            <person name="Li T."/>
            <person name="Zhao F."/>
            <person name="Overmann J."/>
            <person name="Bryant D.A."/>
            <person name="Richardson P."/>
        </authorList>
    </citation>
    <scope>NUCLEOTIDE SEQUENCE [LARGE SCALE GENOMIC DNA]</scope>
    <source>
        <strain>DSM 271 / SK 413</strain>
    </source>
</reference>
<sequence length="608" mass="69789">MSLAPGTETDLQNRFRSHFCGRLNTEYENKQVRLAGWIHRKRDHGGLIFIDLRDHTGIAQLIIQPEKQELFQKVERLHVESVIAVQGTVVKRSEETLNSRIPSGAIEVLVDDVQVESHAVALPFPVADELQTSEELRLTYRFLDLRREKIHQNIVFRSQLISKVRRYLEDHGFMEIQTPILTASSPEGARDFLVPSRLHPGKFYALPQAPQQFKQLLMVSGFPRYFQIAPCFRDEDARADRSPGEFYQVDMEMAFIEQDDLFEILEGMLRYLTETMSTKRITQFPFPRLSYRDVMNRFGSDKPDLRVPLEMQDVTELFVGSSFKVFASNTKEGSCIKAMVLKGRGTESRQFYDKAEKRARELGAPGLAYVQYREEGPKGPIVKFLSEAELSALQERLAIETGDVVFFGAGKWEKTCKIMGGIREYFSDLFELDRDELSFCWIVDFPLYEFDEKESRIDFSHNPFSMPQGEMDALDTMNPLDILAYQYDIVCNGIELSSGAIRNHRPDIMYRAFEIAGYSKEEVDKRFGHMIEAFKMGAPPHGGIAPGLDRLVMILRDEHNIREVIAFPMNQQAQDLMMSAPSDVSRLQLRELHLKLDLPVETAEQEPG</sequence>
<feature type="chain" id="PRO_1000091026" description="Aspartate--tRNA(Asp/Asn) ligase">
    <location>
        <begin position="1"/>
        <end position="608"/>
    </location>
</feature>
<feature type="region of interest" description="Aspartate" evidence="1">
    <location>
        <begin position="211"/>
        <end position="214"/>
    </location>
</feature>
<feature type="binding site" evidence="1">
    <location>
        <position position="187"/>
    </location>
    <ligand>
        <name>L-aspartate</name>
        <dbReference type="ChEBI" id="CHEBI:29991"/>
    </ligand>
</feature>
<feature type="binding site" evidence="1">
    <location>
        <begin position="233"/>
        <end position="235"/>
    </location>
    <ligand>
        <name>ATP</name>
        <dbReference type="ChEBI" id="CHEBI:30616"/>
    </ligand>
</feature>
<feature type="binding site" evidence="1">
    <location>
        <position position="233"/>
    </location>
    <ligand>
        <name>L-aspartate</name>
        <dbReference type="ChEBI" id="CHEBI:29991"/>
    </ligand>
</feature>
<feature type="binding site" evidence="1">
    <location>
        <position position="461"/>
    </location>
    <ligand>
        <name>L-aspartate</name>
        <dbReference type="ChEBI" id="CHEBI:29991"/>
    </ligand>
</feature>
<feature type="binding site" evidence="1">
    <location>
        <position position="495"/>
    </location>
    <ligand>
        <name>ATP</name>
        <dbReference type="ChEBI" id="CHEBI:30616"/>
    </ligand>
</feature>
<feature type="binding site" evidence="1">
    <location>
        <position position="502"/>
    </location>
    <ligand>
        <name>L-aspartate</name>
        <dbReference type="ChEBI" id="CHEBI:29991"/>
    </ligand>
</feature>
<feature type="binding site" evidence="1">
    <location>
        <begin position="547"/>
        <end position="550"/>
    </location>
    <ligand>
        <name>ATP</name>
        <dbReference type="ChEBI" id="CHEBI:30616"/>
    </ligand>
</feature>
<feature type="site" description="Important for tRNA non-discrimination" evidence="1">
    <location>
        <position position="44"/>
    </location>
</feature>
<keyword id="KW-0030">Aminoacyl-tRNA synthetase</keyword>
<keyword id="KW-0067">ATP-binding</keyword>
<keyword id="KW-0963">Cytoplasm</keyword>
<keyword id="KW-0436">Ligase</keyword>
<keyword id="KW-0547">Nucleotide-binding</keyword>
<keyword id="KW-0648">Protein biosynthesis</keyword>
<accession>B4S8V2</accession>
<organism>
    <name type="scientific">Prosthecochloris aestuarii (strain DSM 271 / SK 413)</name>
    <dbReference type="NCBI Taxonomy" id="290512"/>
    <lineage>
        <taxon>Bacteria</taxon>
        <taxon>Pseudomonadati</taxon>
        <taxon>Chlorobiota</taxon>
        <taxon>Chlorobiia</taxon>
        <taxon>Chlorobiales</taxon>
        <taxon>Chlorobiaceae</taxon>
        <taxon>Prosthecochloris</taxon>
    </lineage>
</organism>
<name>SYDND_PROA2</name>
<comment type="function">
    <text evidence="1">Aspartyl-tRNA synthetase with relaxed tRNA specificity since it is able to aspartylate not only its cognate tRNA(Asp) but also tRNA(Asn). Reaction proceeds in two steps: L-aspartate is first activated by ATP to form Asp-AMP and then transferred to the acceptor end of tRNA(Asp/Asn).</text>
</comment>
<comment type="catalytic activity">
    <reaction evidence="1">
        <text>tRNA(Asx) + L-aspartate + ATP = L-aspartyl-tRNA(Asx) + AMP + diphosphate</text>
        <dbReference type="Rhea" id="RHEA:18349"/>
        <dbReference type="Rhea" id="RHEA-COMP:9710"/>
        <dbReference type="Rhea" id="RHEA-COMP:9711"/>
        <dbReference type="ChEBI" id="CHEBI:29991"/>
        <dbReference type="ChEBI" id="CHEBI:30616"/>
        <dbReference type="ChEBI" id="CHEBI:33019"/>
        <dbReference type="ChEBI" id="CHEBI:78442"/>
        <dbReference type="ChEBI" id="CHEBI:78516"/>
        <dbReference type="ChEBI" id="CHEBI:456215"/>
        <dbReference type="EC" id="6.1.1.23"/>
    </reaction>
</comment>
<comment type="subunit">
    <text evidence="1">Homodimer.</text>
</comment>
<comment type="subcellular location">
    <subcellularLocation>
        <location evidence="1">Cytoplasm</location>
    </subcellularLocation>
</comment>
<comment type="similarity">
    <text evidence="1">Belongs to the class-II aminoacyl-tRNA synthetase family. Type 1 subfamily.</text>
</comment>
<dbReference type="EC" id="6.1.1.23" evidence="1"/>
<dbReference type="EMBL" id="CP001108">
    <property type="protein sequence ID" value="ACF46489.1"/>
    <property type="molecule type" value="Genomic_DNA"/>
</dbReference>
<dbReference type="RefSeq" id="WP_012506022.1">
    <property type="nucleotide sequence ID" value="NC_011059.1"/>
</dbReference>
<dbReference type="SMR" id="B4S8V2"/>
<dbReference type="STRING" id="290512.Paes_1469"/>
<dbReference type="KEGG" id="paa:Paes_1469"/>
<dbReference type="eggNOG" id="COG0173">
    <property type="taxonomic scope" value="Bacteria"/>
</dbReference>
<dbReference type="HOGENOM" id="CLU_014330_3_2_10"/>
<dbReference type="Proteomes" id="UP000002725">
    <property type="component" value="Chromosome"/>
</dbReference>
<dbReference type="GO" id="GO:0005737">
    <property type="term" value="C:cytoplasm"/>
    <property type="evidence" value="ECO:0007669"/>
    <property type="project" value="UniProtKB-SubCell"/>
</dbReference>
<dbReference type="GO" id="GO:0004815">
    <property type="term" value="F:aspartate-tRNA ligase activity"/>
    <property type="evidence" value="ECO:0007669"/>
    <property type="project" value="UniProtKB-UniRule"/>
</dbReference>
<dbReference type="GO" id="GO:0050560">
    <property type="term" value="F:aspartate-tRNA(Asn) ligase activity"/>
    <property type="evidence" value="ECO:0007669"/>
    <property type="project" value="UniProtKB-EC"/>
</dbReference>
<dbReference type="GO" id="GO:0005524">
    <property type="term" value="F:ATP binding"/>
    <property type="evidence" value="ECO:0007669"/>
    <property type="project" value="UniProtKB-UniRule"/>
</dbReference>
<dbReference type="GO" id="GO:0003676">
    <property type="term" value="F:nucleic acid binding"/>
    <property type="evidence" value="ECO:0007669"/>
    <property type="project" value="InterPro"/>
</dbReference>
<dbReference type="GO" id="GO:0006422">
    <property type="term" value="P:aspartyl-tRNA aminoacylation"/>
    <property type="evidence" value="ECO:0007669"/>
    <property type="project" value="UniProtKB-UniRule"/>
</dbReference>
<dbReference type="CDD" id="cd00777">
    <property type="entry name" value="AspRS_core"/>
    <property type="match status" value="1"/>
</dbReference>
<dbReference type="CDD" id="cd04317">
    <property type="entry name" value="EcAspRS_like_N"/>
    <property type="match status" value="1"/>
</dbReference>
<dbReference type="Gene3D" id="3.30.930.10">
    <property type="entry name" value="Bira Bifunctional Protein, Domain 2"/>
    <property type="match status" value="1"/>
</dbReference>
<dbReference type="Gene3D" id="3.30.1360.30">
    <property type="entry name" value="GAD-like domain"/>
    <property type="match status" value="1"/>
</dbReference>
<dbReference type="Gene3D" id="2.40.50.140">
    <property type="entry name" value="Nucleic acid-binding proteins"/>
    <property type="match status" value="1"/>
</dbReference>
<dbReference type="HAMAP" id="MF_00044">
    <property type="entry name" value="Asp_tRNA_synth_type1"/>
    <property type="match status" value="1"/>
</dbReference>
<dbReference type="InterPro" id="IPR004364">
    <property type="entry name" value="Aa-tRNA-synt_II"/>
</dbReference>
<dbReference type="InterPro" id="IPR006195">
    <property type="entry name" value="aa-tRNA-synth_II"/>
</dbReference>
<dbReference type="InterPro" id="IPR045864">
    <property type="entry name" value="aa-tRNA-synth_II/BPL/LPL"/>
</dbReference>
<dbReference type="InterPro" id="IPR004524">
    <property type="entry name" value="Asp-tRNA-ligase_1"/>
</dbReference>
<dbReference type="InterPro" id="IPR047089">
    <property type="entry name" value="Asp-tRNA-ligase_1_N"/>
</dbReference>
<dbReference type="InterPro" id="IPR002312">
    <property type="entry name" value="Asp/Asn-tRNA-synth_IIb"/>
</dbReference>
<dbReference type="InterPro" id="IPR047090">
    <property type="entry name" value="AspRS_core"/>
</dbReference>
<dbReference type="InterPro" id="IPR004115">
    <property type="entry name" value="GAD-like_sf"/>
</dbReference>
<dbReference type="InterPro" id="IPR029351">
    <property type="entry name" value="GAD_dom"/>
</dbReference>
<dbReference type="InterPro" id="IPR012340">
    <property type="entry name" value="NA-bd_OB-fold"/>
</dbReference>
<dbReference type="InterPro" id="IPR004365">
    <property type="entry name" value="NA-bd_OB_tRNA"/>
</dbReference>
<dbReference type="NCBIfam" id="TIGR00459">
    <property type="entry name" value="aspS_bact"/>
    <property type="match status" value="1"/>
</dbReference>
<dbReference type="NCBIfam" id="NF001750">
    <property type="entry name" value="PRK00476.1"/>
    <property type="match status" value="1"/>
</dbReference>
<dbReference type="PANTHER" id="PTHR22594:SF5">
    <property type="entry name" value="ASPARTATE--TRNA LIGASE, MITOCHONDRIAL"/>
    <property type="match status" value="1"/>
</dbReference>
<dbReference type="PANTHER" id="PTHR22594">
    <property type="entry name" value="ASPARTYL/LYSYL-TRNA SYNTHETASE"/>
    <property type="match status" value="1"/>
</dbReference>
<dbReference type="Pfam" id="PF02938">
    <property type="entry name" value="GAD"/>
    <property type="match status" value="1"/>
</dbReference>
<dbReference type="Pfam" id="PF00152">
    <property type="entry name" value="tRNA-synt_2"/>
    <property type="match status" value="1"/>
</dbReference>
<dbReference type="Pfam" id="PF01336">
    <property type="entry name" value="tRNA_anti-codon"/>
    <property type="match status" value="1"/>
</dbReference>
<dbReference type="PRINTS" id="PR01042">
    <property type="entry name" value="TRNASYNTHASP"/>
</dbReference>
<dbReference type="SUPFAM" id="SSF55681">
    <property type="entry name" value="Class II aaRS and biotin synthetases"/>
    <property type="match status" value="1"/>
</dbReference>
<dbReference type="SUPFAM" id="SSF55261">
    <property type="entry name" value="GAD domain-like"/>
    <property type="match status" value="1"/>
</dbReference>
<dbReference type="SUPFAM" id="SSF50249">
    <property type="entry name" value="Nucleic acid-binding proteins"/>
    <property type="match status" value="1"/>
</dbReference>
<dbReference type="PROSITE" id="PS50862">
    <property type="entry name" value="AA_TRNA_LIGASE_II"/>
    <property type="match status" value="1"/>
</dbReference>